<name>CLPB_HELPJ</name>
<protein>
    <recommendedName>
        <fullName>Chaperone protein ClpB</fullName>
    </recommendedName>
</protein>
<feature type="chain" id="PRO_0000191129" description="Chaperone protein ClpB">
    <location>
        <begin position="1"/>
        <end position="856"/>
    </location>
</feature>
<feature type="domain" description="Clp R" evidence="2">
    <location>
        <begin position="4"/>
        <end position="144"/>
    </location>
</feature>
<feature type="region of interest" description="Repeat 1" evidence="2">
    <location>
        <begin position="7"/>
        <end position="72"/>
    </location>
</feature>
<feature type="region of interest" description="Repeat 2" evidence="2">
    <location>
        <begin position="85"/>
        <end position="144"/>
    </location>
</feature>
<feature type="region of interest" description="NBD1" evidence="1">
    <location>
        <begin position="157"/>
        <end position="337"/>
    </location>
</feature>
<feature type="region of interest" description="Linker" evidence="1">
    <location>
        <begin position="338"/>
        <end position="545"/>
    </location>
</feature>
<feature type="region of interest" description="NBD2" evidence="1">
    <location>
        <begin position="555"/>
        <end position="763"/>
    </location>
</feature>
<feature type="region of interest" description="C-terminal" evidence="1">
    <location>
        <begin position="764"/>
        <end position="856"/>
    </location>
</feature>
<feature type="coiled-coil region" evidence="1">
    <location>
        <begin position="388"/>
        <end position="522"/>
    </location>
</feature>
<feature type="binding site" evidence="1">
    <location>
        <begin position="204"/>
        <end position="211"/>
    </location>
    <ligand>
        <name>ATP</name>
        <dbReference type="ChEBI" id="CHEBI:30616"/>
        <label>1</label>
    </ligand>
</feature>
<feature type="binding site" evidence="1">
    <location>
        <begin position="605"/>
        <end position="612"/>
    </location>
    <ligand>
        <name>ATP</name>
        <dbReference type="ChEBI" id="CHEBI:30616"/>
        <label>2</label>
    </ligand>
</feature>
<dbReference type="EMBL" id="AE001439">
    <property type="protein sequence ID" value="AAD05825.1"/>
    <property type="molecule type" value="Genomic_DNA"/>
</dbReference>
<dbReference type="PIR" id="C71956">
    <property type="entry name" value="C71956"/>
</dbReference>
<dbReference type="RefSeq" id="WP_001047947.1">
    <property type="nucleotide sequence ID" value="NC_000921.1"/>
</dbReference>
<dbReference type="SMR" id="Q9ZMH1"/>
<dbReference type="KEGG" id="hpj:jhp_0249"/>
<dbReference type="PATRIC" id="fig|85963.30.peg.765"/>
<dbReference type="eggNOG" id="COG0542">
    <property type="taxonomic scope" value="Bacteria"/>
</dbReference>
<dbReference type="Proteomes" id="UP000000804">
    <property type="component" value="Chromosome"/>
</dbReference>
<dbReference type="GO" id="GO:0005737">
    <property type="term" value="C:cytoplasm"/>
    <property type="evidence" value="ECO:0007669"/>
    <property type="project" value="UniProtKB-SubCell"/>
</dbReference>
<dbReference type="GO" id="GO:0005524">
    <property type="term" value="F:ATP binding"/>
    <property type="evidence" value="ECO:0007669"/>
    <property type="project" value="UniProtKB-KW"/>
</dbReference>
<dbReference type="GO" id="GO:0016887">
    <property type="term" value="F:ATP hydrolysis activity"/>
    <property type="evidence" value="ECO:0007669"/>
    <property type="project" value="InterPro"/>
</dbReference>
<dbReference type="GO" id="GO:0034605">
    <property type="term" value="P:cellular response to heat"/>
    <property type="evidence" value="ECO:0007669"/>
    <property type="project" value="TreeGrafter"/>
</dbReference>
<dbReference type="CDD" id="cd00009">
    <property type="entry name" value="AAA"/>
    <property type="match status" value="1"/>
</dbReference>
<dbReference type="CDD" id="cd19499">
    <property type="entry name" value="RecA-like_ClpB_Hsp104-like"/>
    <property type="match status" value="1"/>
</dbReference>
<dbReference type="FunFam" id="3.40.50.300:FF:000120">
    <property type="entry name" value="ATP-dependent chaperone ClpB"/>
    <property type="match status" value="1"/>
</dbReference>
<dbReference type="FunFam" id="3.40.50.300:FF:000025">
    <property type="entry name" value="ATP-dependent Clp protease subunit"/>
    <property type="match status" value="1"/>
</dbReference>
<dbReference type="FunFam" id="3.40.50.300:FF:000010">
    <property type="entry name" value="Chaperone clpB 1, putative"/>
    <property type="match status" value="1"/>
</dbReference>
<dbReference type="Gene3D" id="1.10.8.60">
    <property type="match status" value="1"/>
</dbReference>
<dbReference type="Gene3D" id="1.10.1780.10">
    <property type="entry name" value="Clp, N-terminal domain"/>
    <property type="match status" value="1"/>
</dbReference>
<dbReference type="Gene3D" id="3.40.50.300">
    <property type="entry name" value="P-loop containing nucleotide triphosphate hydrolases"/>
    <property type="match status" value="3"/>
</dbReference>
<dbReference type="InterPro" id="IPR003593">
    <property type="entry name" value="AAA+_ATPase"/>
</dbReference>
<dbReference type="InterPro" id="IPR003959">
    <property type="entry name" value="ATPase_AAA_core"/>
</dbReference>
<dbReference type="InterPro" id="IPR019489">
    <property type="entry name" value="Clp_ATPase_C"/>
</dbReference>
<dbReference type="InterPro" id="IPR036628">
    <property type="entry name" value="Clp_N_dom_sf"/>
</dbReference>
<dbReference type="InterPro" id="IPR004176">
    <property type="entry name" value="Clp_R_dom"/>
</dbReference>
<dbReference type="InterPro" id="IPR001270">
    <property type="entry name" value="ClpA/B"/>
</dbReference>
<dbReference type="InterPro" id="IPR018368">
    <property type="entry name" value="ClpA/B_CS1"/>
</dbReference>
<dbReference type="InterPro" id="IPR028299">
    <property type="entry name" value="ClpA/B_CS2"/>
</dbReference>
<dbReference type="InterPro" id="IPR041546">
    <property type="entry name" value="ClpA/ClpB_AAA_lid"/>
</dbReference>
<dbReference type="InterPro" id="IPR050130">
    <property type="entry name" value="ClpA_ClpB"/>
</dbReference>
<dbReference type="InterPro" id="IPR027417">
    <property type="entry name" value="P-loop_NTPase"/>
</dbReference>
<dbReference type="PANTHER" id="PTHR11638">
    <property type="entry name" value="ATP-DEPENDENT CLP PROTEASE"/>
    <property type="match status" value="1"/>
</dbReference>
<dbReference type="PANTHER" id="PTHR11638:SF18">
    <property type="entry name" value="HEAT SHOCK PROTEIN 104"/>
    <property type="match status" value="1"/>
</dbReference>
<dbReference type="Pfam" id="PF00004">
    <property type="entry name" value="AAA"/>
    <property type="match status" value="1"/>
</dbReference>
<dbReference type="Pfam" id="PF07724">
    <property type="entry name" value="AAA_2"/>
    <property type="match status" value="1"/>
</dbReference>
<dbReference type="Pfam" id="PF17871">
    <property type="entry name" value="AAA_lid_9"/>
    <property type="match status" value="1"/>
</dbReference>
<dbReference type="Pfam" id="PF02861">
    <property type="entry name" value="Clp_N"/>
    <property type="match status" value="2"/>
</dbReference>
<dbReference type="Pfam" id="PF10431">
    <property type="entry name" value="ClpB_D2-small"/>
    <property type="match status" value="1"/>
</dbReference>
<dbReference type="PRINTS" id="PR00300">
    <property type="entry name" value="CLPPROTEASEA"/>
</dbReference>
<dbReference type="SMART" id="SM00382">
    <property type="entry name" value="AAA"/>
    <property type="match status" value="2"/>
</dbReference>
<dbReference type="SMART" id="SM01086">
    <property type="entry name" value="ClpB_D2-small"/>
    <property type="match status" value="1"/>
</dbReference>
<dbReference type="SUPFAM" id="SSF81923">
    <property type="entry name" value="Double Clp-N motif"/>
    <property type="match status" value="1"/>
</dbReference>
<dbReference type="SUPFAM" id="SSF52540">
    <property type="entry name" value="P-loop containing nucleoside triphosphate hydrolases"/>
    <property type="match status" value="2"/>
</dbReference>
<dbReference type="PROSITE" id="PS51903">
    <property type="entry name" value="CLP_R"/>
    <property type="match status" value="1"/>
</dbReference>
<dbReference type="PROSITE" id="PS00870">
    <property type="entry name" value="CLPAB_1"/>
    <property type="match status" value="1"/>
</dbReference>
<dbReference type="PROSITE" id="PS00871">
    <property type="entry name" value="CLPAB_2"/>
    <property type="match status" value="1"/>
</dbReference>
<evidence type="ECO:0000250" key="1"/>
<evidence type="ECO:0000255" key="2">
    <source>
        <dbReference type="PROSITE-ProRule" id="PRU01251"/>
    </source>
</evidence>
<evidence type="ECO:0000305" key="3"/>
<sequence>MNLFEKMTDQLHETLDSAIALALHHKNAEVTPMHMLFAMLNNSQGILIQALQKMPVDIEALKLSVQSELNKFAKVSQISKQNIQLNQALIQSLENAQGLMAKRGDSFIATDAYLLANMNLFESVLKPYLDTKELQKTLESLRKGRTIQDKNDDSNLESLEKFGIDLTQKALENKLDPVIGRDEEIIRMMQILIRKTKNNPILLGEPGVGKTAVVEGLAQRIVNKEVPKTLLNKRVVALDLSLLVAGAKYRGEFEERLKKVIEEVKKSANVILFIDEIHTIVGAGASEGGMDAANILKPALARGELHTIGATTLKEYRKYFEKDMALQRRFQPILLNEPSINEALQILRGLKETLETHHNITINDSALIASAKLSSRYITDRFLPDKAIDLIDEGAAQLKMQMESEPAKLSSVKRSIQRLEMEKQALEMENKESNHKRMQEILKELSDLKEEKIQLEAQFENEKEVFKEISRLKMEMEGLKKEAERFKRNGDYQQAAEIEYSKIPEKEKKEKELQHKWETMQQNGALLQNALTENNIAEIVSQWTHIPVQKMLQSEKNRVLNIESELQKRVVGQEKALKAIAKAIKRNKAGLSDSNKPIGSFLFLGPTGVGKTESAKALAQFLFDSDKNLIRIDMSEYMEKHAISRLIGAAPGYVGYEEGGQLTEAVRRKPYSVVLLDEVEKAHPDVFNLLLQVLDEGHLTDSKGVRVDFKNTILILTSNVASGALLEEDLSEADKQKAIKESLRQFFKPEFLNRLDEIISFNALDSHAIINIVGILFENVQKKALERGINITLDEKAKELIAEAGFDRFYGARPLKRALYEMVEDKLAELILEDKIKENDSVAFVVENNEIVPKIK</sequence>
<proteinExistence type="inferred from homology"/>
<comment type="function">
    <text evidence="1">Part of a stress-induced multi-chaperone system, it is involved in the recovery of the cell from heat-induced damage, in cooperation with DnaK, DnaJ and GrpE. Acts before DnaK, in the processing of protein aggregates. Protein binding stimulates the ATPase activity; ATP hydrolysis unfolds the denatured protein aggregates, which probably helps expose new hydrophobic binding sites on the surface of ClpB-bound aggregates, contributing to the solubilization and refolding of denatured protein aggregates by DnaK (By similarity).</text>
</comment>
<comment type="subunit">
    <text evidence="1">Homohexamer. The oligomerization is ATP-dependent (By similarity).</text>
</comment>
<comment type="subcellular location">
    <subcellularLocation>
        <location evidence="3">Cytoplasm</location>
    </subcellularLocation>
</comment>
<comment type="domain">
    <text evidence="1">The Clp repeat (R) domain probably functions as a substrate-discriminating domain, recruiting aggregated proteins to the ClpB hexamer and/or stabilizing bound proteins. The NBD2 domain is responsible for oligomerization, whereas the NBD1 domain stabilizes the hexamer probably in an ATP-dependent manner. The movement of the coiled-coil domain is essential for ClpB ability to rescue proteins from an aggregated state, probably by pulling apart large aggregated proteins, which are bound between the coiled-coils motifs of adjacent ClpB subunits in the functional hexamer (By similarity).</text>
</comment>
<comment type="similarity">
    <text evidence="3">Belongs to the ClpA/ClpB family.</text>
</comment>
<accession>Q9ZMH1</accession>
<gene>
    <name type="primary">clpB</name>
    <name type="ordered locus">jhp_0249</name>
</gene>
<reference key="1">
    <citation type="journal article" date="1999" name="Nature">
        <title>Genomic sequence comparison of two unrelated isolates of the human gastric pathogen Helicobacter pylori.</title>
        <authorList>
            <person name="Alm R.A."/>
            <person name="Ling L.-S.L."/>
            <person name="Moir D.T."/>
            <person name="King B.L."/>
            <person name="Brown E.D."/>
            <person name="Doig P.C."/>
            <person name="Smith D.R."/>
            <person name="Noonan B."/>
            <person name="Guild B.C."/>
            <person name="deJonge B.L."/>
            <person name="Carmel G."/>
            <person name="Tummino P.J."/>
            <person name="Caruso A."/>
            <person name="Uria-Nickelsen M."/>
            <person name="Mills D.M."/>
            <person name="Ives C."/>
            <person name="Gibson R."/>
            <person name="Merberg D."/>
            <person name="Mills S.D."/>
            <person name="Jiang Q."/>
            <person name="Taylor D.E."/>
            <person name="Vovis G.F."/>
            <person name="Trust T.J."/>
        </authorList>
    </citation>
    <scope>NUCLEOTIDE SEQUENCE [LARGE SCALE GENOMIC DNA]</scope>
    <source>
        <strain>J99 / ATCC 700824</strain>
    </source>
</reference>
<keyword id="KW-0067">ATP-binding</keyword>
<keyword id="KW-0143">Chaperone</keyword>
<keyword id="KW-0175">Coiled coil</keyword>
<keyword id="KW-0963">Cytoplasm</keyword>
<keyword id="KW-0547">Nucleotide-binding</keyword>
<keyword id="KW-0677">Repeat</keyword>
<keyword id="KW-0346">Stress response</keyword>
<organism>
    <name type="scientific">Helicobacter pylori (strain J99 / ATCC 700824)</name>
    <name type="common">Campylobacter pylori J99</name>
    <dbReference type="NCBI Taxonomy" id="85963"/>
    <lineage>
        <taxon>Bacteria</taxon>
        <taxon>Pseudomonadati</taxon>
        <taxon>Campylobacterota</taxon>
        <taxon>Epsilonproteobacteria</taxon>
        <taxon>Campylobacterales</taxon>
        <taxon>Helicobacteraceae</taxon>
        <taxon>Helicobacter</taxon>
    </lineage>
</organism>